<feature type="chain" id="PRO_0000353197" description="Mitogen-activated protein kinase kinase kinase dlk-1">
    <location>
        <begin position="1"/>
        <end position="857"/>
    </location>
</feature>
<feature type="domain" description="Protein kinase" evidence="4">
    <location>
        <begin position="62"/>
        <end position="304"/>
    </location>
</feature>
<feature type="region of interest" description="Disordered" evidence="6">
    <location>
        <begin position="441"/>
        <end position="503"/>
    </location>
</feature>
<feature type="region of interest" description="Disordered" evidence="6">
    <location>
        <begin position="572"/>
        <end position="625"/>
    </location>
</feature>
<feature type="region of interest" description="Disordered" evidence="6">
    <location>
        <begin position="733"/>
        <end position="775"/>
    </location>
</feature>
<feature type="region of interest" description="Disordered" evidence="6">
    <location>
        <begin position="818"/>
        <end position="857"/>
    </location>
</feature>
<feature type="compositionally biased region" description="Low complexity" evidence="6">
    <location>
        <begin position="467"/>
        <end position="488"/>
    </location>
</feature>
<feature type="compositionally biased region" description="Polar residues" evidence="6">
    <location>
        <begin position="609"/>
        <end position="623"/>
    </location>
</feature>
<feature type="compositionally biased region" description="Acidic residues" evidence="6">
    <location>
        <begin position="753"/>
        <end position="762"/>
    </location>
</feature>
<feature type="compositionally biased region" description="Polar residues" evidence="6">
    <location>
        <begin position="763"/>
        <end position="772"/>
    </location>
</feature>
<feature type="active site" description="Proton acceptor" evidence="3 4 5">
    <location>
        <position position="173"/>
    </location>
</feature>
<feature type="binding site" evidence="3 4">
    <location>
        <begin position="68"/>
        <end position="76"/>
    </location>
    <ligand>
        <name>ATP</name>
        <dbReference type="ChEBI" id="CHEBI:30616"/>
    </ligand>
</feature>
<feature type="binding site" evidence="3 4">
    <location>
        <position position="89"/>
    </location>
    <ligand>
        <name>ATP</name>
        <dbReference type="ChEBI" id="CHEBI:30616"/>
    </ligand>
</feature>
<organism>
    <name type="scientific">Caenorhabditis briggsae</name>
    <dbReference type="NCBI Taxonomy" id="6238"/>
    <lineage>
        <taxon>Eukaryota</taxon>
        <taxon>Metazoa</taxon>
        <taxon>Ecdysozoa</taxon>
        <taxon>Nematoda</taxon>
        <taxon>Chromadorea</taxon>
        <taxon>Rhabditida</taxon>
        <taxon>Rhabditina</taxon>
        <taxon>Rhabditomorpha</taxon>
        <taxon>Rhabditoidea</taxon>
        <taxon>Rhabditidae</taxon>
        <taxon>Peloderinae</taxon>
        <taxon>Caenorhabditis</taxon>
    </lineage>
</organism>
<comment type="function">
    <text evidence="2">Component of a MAP kinase pathway that functions presynaptically to regulate synaptic architecture and presynaptic differentiation. Phosphorylates and activates mkk-4 (By similarity).</text>
</comment>
<comment type="catalytic activity">
    <reaction evidence="3">
        <text>L-seryl-[protein] + ATP = O-phospho-L-seryl-[protein] + ADP + H(+)</text>
        <dbReference type="Rhea" id="RHEA:17989"/>
        <dbReference type="Rhea" id="RHEA-COMP:9863"/>
        <dbReference type="Rhea" id="RHEA-COMP:11604"/>
        <dbReference type="ChEBI" id="CHEBI:15378"/>
        <dbReference type="ChEBI" id="CHEBI:29999"/>
        <dbReference type="ChEBI" id="CHEBI:30616"/>
        <dbReference type="ChEBI" id="CHEBI:83421"/>
        <dbReference type="ChEBI" id="CHEBI:456216"/>
        <dbReference type="EC" id="2.7.11.25"/>
    </reaction>
</comment>
<comment type="catalytic activity">
    <reaction evidence="3">
        <text>L-threonyl-[protein] + ATP = O-phospho-L-threonyl-[protein] + ADP + H(+)</text>
        <dbReference type="Rhea" id="RHEA:46608"/>
        <dbReference type="Rhea" id="RHEA-COMP:11060"/>
        <dbReference type="Rhea" id="RHEA-COMP:11605"/>
        <dbReference type="ChEBI" id="CHEBI:15378"/>
        <dbReference type="ChEBI" id="CHEBI:30013"/>
        <dbReference type="ChEBI" id="CHEBI:30616"/>
        <dbReference type="ChEBI" id="CHEBI:61977"/>
        <dbReference type="ChEBI" id="CHEBI:456216"/>
        <dbReference type="EC" id="2.7.11.25"/>
    </reaction>
</comment>
<comment type="cofactor">
    <cofactor evidence="3">
        <name>Mg(2+)</name>
        <dbReference type="ChEBI" id="CHEBI:18420"/>
    </cofactor>
</comment>
<comment type="subcellular location">
    <subcellularLocation>
        <location evidence="2">Synapse</location>
    </subcellularLocation>
</comment>
<comment type="PTM">
    <text evidence="1">Ubiquitinated by rpm-1. Negatively regulated by ubiquitination by fsn-1 bound rpm-1, followed by degradation (By similarity).</text>
</comment>
<comment type="similarity">
    <text evidence="2">Belongs to the protein kinase superfamily. STE Ser/Thr protein kinase family. MAP kinase kinase kinase subfamily.</text>
</comment>
<proteinExistence type="inferred from homology"/>
<name>DLK1_CAEBR</name>
<dbReference type="EC" id="2.7.11.25"/>
<dbReference type="EMBL" id="HE601079">
    <property type="protein sequence ID" value="CAP28486.1"/>
    <property type="molecule type" value="Genomic_DNA"/>
</dbReference>
<dbReference type="SMR" id="A8X775"/>
<dbReference type="FunCoup" id="A8X775">
    <property type="interactions" value="1244"/>
</dbReference>
<dbReference type="STRING" id="6238.A8X775"/>
<dbReference type="EnsemblMetazoa" id="CBG08707a.1">
    <property type="protein sequence ID" value="CBG08707a.1"/>
    <property type="gene ID" value="WBGene00030453"/>
</dbReference>
<dbReference type="KEGG" id="cbr:CBG_08707"/>
<dbReference type="CTD" id="8582592"/>
<dbReference type="WormBase" id="CBG08707a">
    <property type="protein sequence ID" value="CBP02144"/>
    <property type="gene ID" value="WBGene00030453"/>
    <property type="gene designation" value="Cbr-dlk-1"/>
</dbReference>
<dbReference type="eggNOG" id="KOG4721">
    <property type="taxonomic scope" value="Eukaryota"/>
</dbReference>
<dbReference type="HOGENOM" id="CLU_315036_0_0_1"/>
<dbReference type="InParanoid" id="A8X775"/>
<dbReference type="OMA" id="MKGIRQE"/>
<dbReference type="Proteomes" id="UP000008549">
    <property type="component" value="Unassembled WGS sequence"/>
</dbReference>
<dbReference type="GO" id="GO:0005737">
    <property type="term" value="C:cytoplasm"/>
    <property type="evidence" value="ECO:0000318"/>
    <property type="project" value="GO_Central"/>
</dbReference>
<dbReference type="GO" id="GO:0045202">
    <property type="term" value="C:synapse"/>
    <property type="evidence" value="ECO:0007669"/>
    <property type="project" value="UniProtKB-SubCell"/>
</dbReference>
<dbReference type="GO" id="GO:0005524">
    <property type="term" value="F:ATP binding"/>
    <property type="evidence" value="ECO:0007669"/>
    <property type="project" value="UniProtKB-KW"/>
</dbReference>
<dbReference type="GO" id="GO:0004709">
    <property type="term" value="F:MAP kinase kinase kinase activity"/>
    <property type="evidence" value="ECO:0007669"/>
    <property type="project" value="UniProtKB-EC"/>
</dbReference>
<dbReference type="GO" id="GO:0046872">
    <property type="term" value="F:metal ion binding"/>
    <property type="evidence" value="ECO:0007669"/>
    <property type="project" value="UniProtKB-KW"/>
</dbReference>
<dbReference type="GO" id="GO:0004672">
    <property type="term" value="F:protein kinase activity"/>
    <property type="evidence" value="ECO:0000318"/>
    <property type="project" value="GO_Central"/>
</dbReference>
<dbReference type="GO" id="GO:0106310">
    <property type="term" value="F:protein serine kinase activity"/>
    <property type="evidence" value="ECO:0007669"/>
    <property type="project" value="RHEA"/>
</dbReference>
<dbReference type="GO" id="GO:0006950">
    <property type="term" value="P:response to stress"/>
    <property type="evidence" value="ECO:0007669"/>
    <property type="project" value="UniProtKB-ARBA"/>
</dbReference>
<dbReference type="GO" id="GO:0007165">
    <property type="term" value="P:signal transduction"/>
    <property type="evidence" value="ECO:0000318"/>
    <property type="project" value="GO_Central"/>
</dbReference>
<dbReference type="FunFam" id="1.10.510.10:FF:000087">
    <property type="entry name" value="Mitogen-activated protein kinase kinase kinase 12"/>
    <property type="match status" value="1"/>
</dbReference>
<dbReference type="Gene3D" id="3.30.200.20">
    <property type="entry name" value="Phosphorylase Kinase, domain 1"/>
    <property type="match status" value="1"/>
</dbReference>
<dbReference type="Gene3D" id="1.10.510.10">
    <property type="entry name" value="Transferase(Phosphotransferase) domain 1"/>
    <property type="match status" value="1"/>
</dbReference>
<dbReference type="InterPro" id="IPR011009">
    <property type="entry name" value="Kinase-like_dom_sf"/>
</dbReference>
<dbReference type="InterPro" id="IPR000719">
    <property type="entry name" value="Prot_kinase_dom"/>
</dbReference>
<dbReference type="InterPro" id="IPR001245">
    <property type="entry name" value="Ser-Thr/Tyr_kinase_cat_dom"/>
</dbReference>
<dbReference type="InterPro" id="IPR008271">
    <property type="entry name" value="Ser/Thr_kinase_AS"/>
</dbReference>
<dbReference type="InterPro" id="IPR051681">
    <property type="entry name" value="Ser/Thr_Kinases-Pseudokinases"/>
</dbReference>
<dbReference type="PANTHER" id="PTHR44329:SF304">
    <property type="entry name" value="MITOGEN-ACTIVATED PROTEIN KINASE KINASE KINASE 13-LIKE ISOFORM X1"/>
    <property type="match status" value="1"/>
</dbReference>
<dbReference type="PANTHER" id="PTHR44329">
    <property type="entry name" value="SERINE/THREONINE-PROTEIN KINASE TNNI3K-RELATED"/>
    <property type="match status" value="1"/>
</dbReference>
<dbReference type="Pfam" id="PF00069">
    <property type="entry name" value="Pkinase"/>
    <property type="match status" value="1"/>
</dbReference>
<dbReference type="PRINTS" id="PR00109">
    <property type="entry name" value="TYRKINASE"/>
</dbReference>
<dbReference type="SMART" id="SM00220">
    <property type="entry name" value="S_TKc"/>
    <property type="match status" value="1"/>
</dbReference>
<dbReference type="SUPFAM" id="SSF56112">
    <property type="entry name" value="Protein kinase-like (PK-like)"/>
    <property type="match status" value="1"/>
</dbReference>
<dbReference type="PROSITE" id="PS50011">
    <property type="entry name" value="PROTEIN_KINASE_DOM"/>
    <property type="match status" value="1"/>
</dbReference>
<dbReference type="PROSITE" id="PS00108">
    <property type="entry name" value="PROTEIN_KINASE_ST"/>
    <property type="match status" value="1"/>
</dbReference>
<evidence type="ECO:0000250" key="1"/>
<evidence type="ECO:0000250" key="2">
    <source>
        <dbReference type="UniProtKB" id="O01700"/>
    </source>
</evidence>
<evidence type="ECO:0000250" key="3">
    <source>
        <dbReference type="UniProtKB" id="O43283"/>
    </source>
</evidence>
<evidence type="ECO:0000255" key="4">
    <source>
        <dbReference type="PROSITE-ProRule" id="PRU00159"/>
    </source>
</evidence>
<evidence type="ECO:0000255" key="5">
    <source>
        <dbReference type="PROSITE-ProRule" id="PRU10027"/>
    </source>
</evidence>
<evidence type="ECO:0000256" key="6">
    <source>
        <dbReference type="SAM" id="MobiDB-lite"/>
    </source>
</evidence>
<evidence type="ECO:0000312" key="7">
    <source>
        <dbReference type="EMBL" id="CAP28486.1"/>
    </source>
</evidence>
<accession>A8X775</accession>
<reference evidence="7" key="1">
    <citation type="journal article" date="2003" name="PLoS Biol.">
        <title>The genome sequence of Caenorhabditis briggsae: a platform for comparative genomics.</title>
        <authorList>
            <person name="Stein L.D."/>
            <person name="Bao Z."/>
            <person name="Blasiar D."/>
            <person name="Blumenthal T."/>
            <person name="Brent M.R."/>
            <person name="Chen N."/>
            <person name="Chinwalla A."/>
            <person name="Clarke L."/>
            <person name="Clee C."/>
            <person name="Coghlan A."/>
            <person name="Coulson A."/>
            <person name="D'Eustachio P."/>
            <person name="Fitch D.H.A."/>
            <person name="Fulton L.A."/>
            <person name="Fulton R.E."/>
            <person name="Griffiths-Jones S."/>
            <person name="Harris T.W."/>
            <person name="Hillier L.W."/>
            <person name="Kamath R."/>
            <person name="Kuwabara P.E."/>
            <person name="Mardis E.R."/>
            <person name="Marra M.A."/>
            <person name="Miner T.L."/>
            <person name="Minx P."/>
            <person name="Mullikin J.C."/>
            <person name="Plumb R.W."/>
            <person name="Rogers J."/>
            <person name="Schein J.E."/>
            <person name="Sohrmann M."/>
            <person name="Spieth J."/>
            <person name="Stajich J.E."/>
            <person name="Wei C."/>
            <person name="Willey D."/>
            <person name="Wilson R.K."/>
            <person name="Durbin R.M."/>
            <person name="Waterston R.H."/>
        </authorList>
    </citation>
    <scope>NUCLEOTIDE SEQUENCE [LARGE SCALE GENOMIC DNA]</scope>
    <source>
        <strain evidence="7">AF16</strain>
    </source>
</reference>
<protein>
    <recommendedName>
        <fullName evidence="3">Mitogen-activated protein kinase kinase kinase dlk-1</fullName>
        <ecNumber>2.7.11.25</ecNumber>
    </recommendedName>
    <alternativeName>
        <fullName>DAP kinase-like kinase</fullName>
    </alternativeName>
    <alternativeName>
        <fullName>Death-associated protein kinase-like kinase</fullName>
    </alternativeName>
</protein>
<gene>
    <name evidence="7" type="primary">dlk-1</name>
    <name type="ORF">CBG08707</name>
</gene>
<keyword id="KW-0067">ATP-binding</keyword>
<keyword id="KW-0418">Kinase</keyword>
<keyword id="KW-0460">Magnesium</keyword>
<keyword id="KW-0479">Metal-binding</keyword>
<keyword id="KW-0547">Nucleotide-binding</keyword>
<keyword id="KW-1185">Reference proteome</keyword>
<keyword id="KW-0723">Serine/threonine-protein kinase</keyword>
<keyword id="KW-0770">Synapse</keyword>
<keyword id="KW-0808">Transferase</keyword>
<keyword id="KW-0832">Ubl conjugation</keyword>
<sequence>MMAAAGNASKPSLNNFYAEGLGHLREGLFSCFRPVLGYFGGKPTQEIEKTEDEGWEIPFDAISNLEWLGSGSQGAVFHGQYENRTVAVKKVNQLKETEIKHLRHLRHKNIIEFLGVCSKSPCYCIVMEYCPKGQLCTVLRQKNLITRQMFSDWVKEIADGMHYLHQNKVIHRDLKSPNILISAEDSIKICDFGTSHLQKKNDSTMMSFCGTVSWMAPEMIKKEPCNEKVDVYSFGVVLWEMLTRETPYANIAQMAIIFGVGTNILNLPMPEEAPRGLVLLIKQCLSQKGRNRPSFSHIRQHWEIFKPELFEMTEDEWQVAWDSYREFAKAIQYPSTVTKDHGGPKSAFAMEEEMQRKRHEQLNHIKDIRHMYEAKLKRTNKMYDKLQGCFTELKLKEHELAEWERNLAEREQMHVYNSPRSMSAAPRFQLRGNCYPNEAYEEMSSDEDGQCPPCRGSPYRNSNMSTSSGAQSSPFSRQSSCRSSAGQQTRRSEGANAQKISRNDLLRHSSSYWETIGNRGSPARGSGFSQDSGVWSAGVSSMAINGGVQGGVPVTYAQTIYRNGEGRWSDGRIASRRRVSSSANKNLPPVFFTRDSPSRVPHGVVNHSAPRSSSKLNRSSYPSRNAPHQLEDGCCCNHGRVPRAKSVAVSMATRGRSPTPYDNDASDAAENPDIHYELQIPETTSYDEALKSIGETDDVEMDAANGVNPIYSSPITTYNNPCHVNYENVTEENANDIDLTSSMDSRRSRADDADVESSEDEGNGNNILNTSMESEELRYRIDTSQSTMMSSLERSLEIGATRSDGLSDNERRVQAVKHSIKTHRRTSSNPQAIIHQRIEEYSSSATEDSDDAGAVRI</sequence>